<organism>
    <name type="scientific">Bacillus mycoides (strain KBAB4)</name>
    <name type="common">Bacillus weihenstephanensis</name>
    <dbReference type="NCBI Taxonomy" id="315730"/>
    <lineage>
        <taxon>Bacteria</taxon>
        <taxon>Bacillati</taxon>
        <taxon>Bacillota</taxon>
        <taxon>Bacilli</taxon>
        <taxon>Bacillales</taxon>
        <taxon>Bacillaceae</taxon>
        <taxon>Bacillus</taxon>
        <taxon>Bacillus cereus group</taxon>
    </lineage>
</organism>
<comment type="function">
    <text evidence="1">Associates with the EF-Tu.GDP complex and induces the exchange of GDP to GTP. It remains bound to the aminoacyl-tRNA.EF-Tu.GTP complex up to the GTP hydrolysis stage on the ribosome.</text>
</comment>
<comment type="subcellular location">
    <subcellularLocation>
        <location evidence="1">Cytoplasm</location>
    </subcellularLocation>
</comment>
<comment type="similarity">
    <text evidence="1">Belongs to the EF-Ts family.</text>
</comment>
<dbReference type="EMBL" id="CP000903">
    <property type="protein sequence ID" value="ABY44820.1"/>
    <property type="molecule type" value="Genomic_DNA"/>
</dbReference>
<dbReference type="RefSeq" id="WP_002088177.1">
    <property type="nucleotide sequence ID" value="NC_010184.1"/>
</dbReference>
<dbReference type="SMR" id="A9VT64"/>
<dbReference type="GeneID" id="66266610"/>
<dbReference type="KEGG" id="bwe:BcerKBAB4_3649"/>
<dbReference type="eggNOG" id="COG0264">
    <property type="taxonomic scope" value="Bacteria"/>
</dbReference>
<dbReference type="HOGENOM" id="CLU_047155_0_2_9"/>
<dbReference type="Proteomes" id="UP000002154">
    <property type="component" value="Chromosome"/>
</dbReference>
<dbReference type="GO" id="GO:0005737">
    <property type="term" value="C:cytoplasm"/>
    <property type="evidence" value="ECO:0007669"/>
    <property type="project" value="UniProtKB-SubCell"/>
</dbReference>
<dbReference type="GO" id="GO:0003746">
    <property type="term" value="F:translation elongation factor activity"/>
    <property type="evidence" value="ECO:0007669"/>
    <property type="project" value="UniProtKB-UniRule"/>
</dbReference>
<dbReference type="CDD" id="cd14275">
    <property type="entry name" value="UBA_EF-Ts"/>
    <property type="match status" value="1"/>
</dbReference>
<dbReference type="FunFam" id="1.10.286.20:FF:000003">
    <property type="entry name" value="Elongation factor Ts"/>
    <property type="match status" value="1"/>
</dbReference>
<dbReference type="FunFam" id="1.10.8.10:FF:000001">
    <property type="entry name" value="Elongation factor Ts"/>
    <property type="match status" value="1"/>
</dbReference>
<dbReference type="FunFam" id="3.30.479.20:FF:000005">
    <property type="entry name" value="Elongation factor Ts"/>
    <property type="match status" value="1"/>
</dbReference>
<dbReference type="Gene3D" id="1.10.286.20">
    <property type="match status" value="1"/>
</dbReference>
<dbReference type="Gene3D" id="1.10.8.10">
    <property type="entry name" value="DNA helicase RuvA subunit, C-terminal domain"/>
    <property type="match status" value="1"/>
</dbReference>
<dbReference type="Gene3D" id="3.30.479.20">
    <property type="entry name" value="Elongation factor Ts, dimerisation domain"/>
    <property type="match status" value="2"/>
</dbReference>
<dbReference type="HAMAP" id="MF_00050">
    <property type="entry name" value="EF_Ts"/>
    <property type="match status" value="1"/>
</dbReference>
<dbReference type="InterPro" id="IPR036402">
    <property type="entry name" value="EF-Ts_dimer_sf"/>
</dbReference>
<dbReference type="InterPro" id="IPR001816">
    <property type="entry name" value="Transl_elong_EFTs/EF1B"/>
</dbReference>
<dbReference type="InterPro" id="IPR014039">
    <property type="entry name" value="Transl_elong_EFTs/EF1B_dimer"/>
</dbReference>
<dbReference type="InterPro" id="IPR018101">
    <property type="entry name" value="Transl_elong_Ts_CS"/>
</dbReference>
<dbReference type="InterPro" id="IPR009060">
    <property type="entry name" value="UBA-like_sf"/>
</dbReference>
<dbReference type="NCBIfam" id="TIGR00116">
    <property type="entry name" value="tsf"/>
    <property type="match status" value="1"/>
</dbReference>
<dbReference type="PANTHER" id="PTHR11741">
    <property type="entry name" value="ELONGATION FACTOR TS"/>
    <property type="match status" value="1"/>
</dbReference>
<dbReference type="PANTHER" id="PTHR11741:SF0">
    <property type="entry name" value="ELONGATION FACTOR TS, MITOCHONDRIAL"/>
    <property type="match status" value="1"/>
</dbReference>
<dbReference type="Pfam" id="PF00889">
    <property type="entry name" value="EF_TS"/>
    <property type="match status" value="1"/>
</dbReference>
<dbReference type="SUPFAM" id="SSF54713">
    <property type="entry name" value="Elongation factor Ts (EF-Ts), dimerisation domain"/>
    <property type="match status" value="2"/>
</dbReference>
<dbReference type="SUPFAM" id="SSF46934">
    <property type="entry name" value="UBA-like"/>
    <property type="match status" value="1"/>
</dbReference>
<dbReference type="PROSITE" id="PS01126">
    <property type="entry name" value="EF_TS_1"/>
    <property type="match status" value="1"/>
</dbReference>
<dbReference type="PROSITE" id="PS01127">
    <property type="entry name" value="EF_TS_2"/>
    <property type="match status" value="1"/>
</dbReference>
<feature type="chain" id="PRO_1000116692" description="Elongation factor Ts">
    <location>
        <begin position="1"/>
        <end position="295"/>
    </location>
</feature>
<feature type="region of interest" description="Involved in Mg(2+) ion dislocation from EF-Tu" evidence="1">
    <location>
        <begin position="79"/>
        <end position="82"/>
    </location>
</feature>
<proteinExistence type="inferred from homology"/>
<evidence type="ECO:0000255" key="1">
    <source>
        <dbReference type="HAMAP-Rule" id="MF_00050"/>
    </source>
</evidence>
<sequence length="295" mass="32374">MAITAQMVKELREKTGAGMMDCKKALTETNGDMEKAIDFLREKGIAKAAKKADRIAAEGLTFIETNGNEGLILELNSETDFVAKNEGFQALIKELAAHLLANKPANVEEAMAQTIEGGKTVEEHINEAIAKIGEKLTLRRFEIVSKTDADAFGAYLHMGGRIGVLTVLEGSTDEAAAKDVAMHIAAVNPKYIDRDAVTAEEVEHERQVLTQQALNEGKPEKIVAKMVEGRLGKFFEEICLLDQTFVKNPDMKVRQFVESKGGTLKGFVRYAVGEGIEKREDNFAEEVMNQVKGNN</sequence>
<protein>
    <recommendedName>
        <fullName evidence="1">Elongation factor Ts</fullName>
        <shortName evidence="1">EF-Ts</shortName>
    </recommendedName>
</protein>
<name>EFTS_BACMK</name>
<accession>A9VT64</accession>
<reference key="1">
    <citation type="journal article" date="2008" name="Chem. Biol. Interact.">
        <title>Extending the Bacillus cereus group genomics to putative food-borne pathogens of different toxicity.</title>
        <authorList>
            <person name="Lapidus A."/>
            <person name="Goltsman E."/>
            <person name="Auger S."/>
            <person name="Galleron N."/>
            <person name="Segurens B."/>
            <person name="Dossat C."/>
            <person name="Land M.L."/>
            <person name="Broussolle V."/>
            <person name="Brillard J."/>
            <person name="Guinebretiere M.-H."/>
            <person name="Sanchis V."/>
            <person name="Nguen-the C."/>
            <person name="Lereclus D."/>
            <person name="Richardson P."/>
            <person name="Wincker P."/>
            <person name="Weissenbach J."/>
            <person name="Ehrlich S.D."/>
            <person name="Sorokin A."/>
        </authorList>
    </citation>
    <scope>NUCLEOTIDE SEQUENCE [LARGE SCALE GENOMIC DNA]</scope>
    <source>
        <strain>KBAB4</strain>
    </source>
</reference>
<keyword id="KW-0963">Cytoplasm</keyword>
<keyword id="KW-0251">Elongation factor</keyword>
<keyword id="KW-0648">Protein biosynthesis</keyword>
<gene>
    <name evidence="1" type="primary">tsf</name>
    <name type="ordered locus">BcerKBAB4_3649</name>
</gene>